<sequence length="958" mass="105820">MNIKLRFPRSSLAIAILSVVAFLVLIALTAFFLVHFYSEYLWYDQLGFTGVIVTQWAAIFVVFCLAFVFVSIFLWLCMFSAHKFRPRYTSLSSVLSHYQKVIDPIRKIVVLLVSLGLGAVAGIFAASRWDIVLAWLNKVPTGKSDPIFHNDISFYFFDLPFYRRLLFFLLVTFVLGGILSILISVVYGALRVDGKEIWLSKGARVQYAVLAAGIFVLLGLEFWLNRFDTLLSDRSGLITGAAYVEVNALIPGFAVLALVALGVALLFCITAFTSRWRLPIIGVALAVVSALVVITALPWGVQRFHVDPNARVLESEYIKRNIESTRFAYGIDKTHEVLYSAKTDVKPGQLRNDARTTASIRILDPGLVSRAFGQLQQFRQYYTFGDDLSVDRYHLGGETRDAVVALRELSLSGLGSGNTWVNQALVYTHGYGLVAAYGNDRTPDGEPKFFESGIPTTGLLGKYEPRIYFGRKSPPYSIVGAPSGAAPFEFDYPSSSGGESYTTFKGSGGPKLDSFLKRLIYAMKFGSEQILLSSQVGDYSQILYDRDPIKRVGKVAPWLRLDRNPYPSVVDGRIVWIVDGYTTSDQFPYSDLNSFTTLSQDSQSLPALVNGSDSINYIRNSVKATVDAYSGQVKLYAWDPNDPILKVWEKVFPGTLHPIKEISGDLMSHVRYPLELFNIQRQILARYHVTDPGVFFSHEDAWGIPIDPQKSEPVMQSTGQRRSRTVFSVAQPPYYLTMRMPGQNLAAYSIYSVFIPKSTGENSRSVLTGYLSANSDAGNIPGQISPDYGKLTLLRLSKDQTVPGPGQIQNAFDSDPKVGNQLNILRQGGQTRVLPGNLLTLPVGGGFLYVQPVYVQSTGSTSYTLLQKVLAAFGNKIAFESTLNQALDSLFAGNSGASNSGTSDISIHPPPHSDLIAQIKAALREKVDALTNKDLVKYAQADSKLNELLSRYLDANRG</sequence>
<proteinExistence type="inferred from homology"/>
<name>Y644_TROW8</name>
<dbReference type="EMBL" id="BX251412">
    <property type="protein sequence ID" value="CAD67307.1"/>
    <property type="molecule type" value="Genomic_DNA"/>
</dbReference>
<dbReference type="RefSeq" id="WP_011096585.1">
    <property type="nucleotide sequence ID" value="NC_004551.1"/>
</dbReference>
<dbReference type="SMR" id="Q83NC0"/>
<dbReference type="GeneID" id="67388425"/>
<dbReference type="KEGG" id="tws:TW644"/>
<dbReference type="HOGENOM" id="CLU_007733_1_0_11"/>
<dbReference type="GO" id="GO:0005576">
    <property type="term" value="C:extracellular region"/>
    <property type="evidence" value="ECO:0007669"/>
    <property type="project" value="TreeGrafter"/>
</dbReference>
<dbReference type="GO" id="GO:0005886">
    <property type="term" value="C:plasma membrane"/>
    <property type="evidence" value="ECO:0007669"/>
    <property type="project" value="UniProtKB-SubCell"/>
</dbReference>
<dbReference type="HAMAP" id="MF_01600">
    <property type="entry name" value="UPF0182"/>
    <property type="match status" value="1"/>
</dbReference>
<dbReference type="InterPro" id="IPR005372">
    <property type="entry name" value="UPF0182"/>
</dbReference>
<dbReference type="PANTHER" id="PTHR39344">
    <property type="entry name" value="UPF0182 PROTEIN SLL1060"/>
    <property type="match status" value="1"/>
</dbReference>
<dbReference type="PANTHER" id="PTHR39344:SF1">
    <property type="entry name" value="UPF0182 PROTEIN SLL1060"/>
    <property type="match status" value="1"/>
</dbReference>
<dbReference type="Pfam" id="PF03699">
    <property type="entry name" value="UPF0182"/>
    <property type="match status" value="1"/>
</dbReference>
<gene>
    <name type="ordered locus">TW644</name>
</gene>
<protein>
    <recommendedName>
        <fullName evidence="1">UPF0182 protein TW644</fullName>
    </recommendedName>
</protein>
<reference key="1">
    <citation type="journal article" date="2003" name="Lancet">
        <title>Sequencing and analysis of the genome of the Whipple's disease bacterium Tropheryma whipplei.</title>
        <authorList>
            <person name="Bentley S.D."/>
            <person name="Maiwald M."/>
            <person name="Murphy L.D."/>
            <person name="Pallen M.J."/>
            <person name="Yeats C.A."/>
            <person name="Dover L.G."/>
            <person name="Norbertczak H.T."/>
            <person name="Besra G.S."/>
            <person name="Quail M.A."/>
            <person name="Harris D.E."/>
            <person name="von Herbay A."/>
            <person name="Goble A."/>
            <person name="Rutter S."/>
            <person name="Squares R."/>
            <person name="Squares S."/>
            <person name="Barrell B.G."/>
            <person name="Parkhill J."/>
            <person name="Relman D.A."/>
        </authorList>
    </citation>
    <scope>NUCLEOTIDE SEQUENCE [LARGE SCALE GENOMIC DNA]</scope>
    <source>
        <strain>TW08/27</strain>
    </source>
</reference>
<keyword id="KW-1003">Cell membrane</keyword>
<keyword id="KW-0472">Membrane</keyword>
<keyword id="KW-0812">Transmembrane</keyword>
<keyword id="KW-1133">Transmembrane helix</keyword>
<organism>
    <name type="scientific">Tropheryma whipplei (strain TW08/27)</name>
    <name type="common">Whipple's bacillus</name>
    <dbReference type="NCBI Taxonomy" id="218496"/>
    <lineage>
        <taxon>Bacteria</taxon>
        <taxon>Bacillati</taxon>
        <taxon>Actinomycetota</taxon>
        <taxon>Actinomycetes</taxon>
        <taxon>Micrococcales</taxon>
        <taxon>Tropherymataceae</taxon>
        <taxon>Tropheryma</taxon>
    </lineage>
</organism>
<evidence type="ECO:0000255" key="1">
    <source>
        <dbReference type="HAMAP-Rule" id="MF_01600"/>
    </source>
</evidence>
<accession>Q83NC0</accession>
<comment type="subcellular location">
    <subcellularLocation>
        <location evidence="1">Cell membrane</location>
        <topology evidence="1">Multi-pass membrane protein</topology>
    </subcellularLocation>
</comment>
<comment type="similarity">
    <text evidence="1">Belongs to the UPF0182 family.</text>
</comment>
<feature type="chain" id="PRO_0000291304" description="UPF0182 protein TW644">
    <location>
        <begin position="1"/>
        <end position="958"/>
    </location>
</feature>
<feature type="transmembrane region" description="Helical" evidence="1">
    <location>
        <begin position="14"/>
        <end position="34"/>
    </location>
</feature>
<feature type="transmembrane region" description="Helical" evidence="1">
    <location>
        <begin position="59"/>
        <end position="79"/>
    </location>
</feature>
<feature type="transmembrane region" description="Helical" evidence="1">
    <location>
        <begin position="107"/>
        <end position="127"/>
    </location>
</feature>
<feature type="transmembrane region" description="Helical" evidence="1">
    <location>
        <begin position="166"/>
        <end position="186"/>
    </location>
</feature>
<feature type="transmembrane region" description="Helical" evidence="1">
    <location>
        <begin position="205"/>
        <end position="225"/>
    </location>
</feature>
<feature type="transmembrane region" description="Helical" evidence="1">
    <location>
        <begin position="249"/>
        <end position="269"/>
    </location>
</feature>
<feature type="transmembrane region" description="Helical" evidence="1">
    <location>
        <begin position="280"/>
        <end position="300"/>
    </location>
</feature>